<evidence type="ECO:0000250" key="1"/>
<evidence type="ECO:0000255" key="2"/>
<evidence type="ECO:0000255" key="3">
    <source>
        <dbReference type="PROSITE-ProRule" id="PRU00041"/>
    </source>
</evidence>
<evidence type="ECO:0000255" key="4">
    <source>
        <dbReference type="PROSITE-ProRule" id="PRU01194"/>
    </source>
</evidence>
<evidence type="ECO:0000256" key="5">
    <source>
        <dbReference type="SAM" id="MobiDB-lite"/>
    </source>
</evidence>
<evidence type="ECO:0000269" key="6">
    <source>
    </source>
</evidence>
<evidence type="ECO:0000269" key="7">
    <source>
    </source>
</evidence>
<evidence type="ECO:0000269" key="8">
    <source>
    </source>
</evidence>
<evidence type="ECO:0000269" key="9">
    <source>
    </source>
</evidence>
<evidence type="ECO:0000269" key="10">
    <source>
    </source>
</evidence>
<evidence type="ECO:0000305" key="11"/>
<evidence type="ECO:0007744" key="12">
    <source>
    </source>
</evidence>
<evidence type="ECO:0007744" key="13">
    <source>
    </source>
</evidence>
<gene>
    <name type="primary">TCB1</name>
    <name type="ordered locus">YOR086C</name>
    <name type="ORF">YOR3141c</name>
</gene>
<keyword id="KW-0106">Calcium</keyword>
<keyword id="KW-0111">Calcium/phospholipid-binding</keyword>
<keyword id="KW-1003">Cell membrane</keyword>
<keyword id="KW-0175">Coiled coil</keyword>
<keyword id="KW-0256">Endoplasmic reticulum</keyword>
<keyword id="KW-0445">Lipid transport</keyword>
<keyword id="KW-0446">Lipid-binding</keyword>
<keyword id="KW-0472">Membrane</keyword>
<keyword id="KW-0479">Metal-binding</keyword>
<keyword id="KW-0597">Phosphoprotein</keyword>
<keyword id="KW-1185">Reference proteome</keyword>
<keyword id="KW-0677">Repeat</keyword>
<keyword id="KW-0812">Transmembrane</keyword>
<keyword id="KW-1133">Transmembrane helix</keyword>
<keyword id="KW-0813">Transport</keyword>
<organism>
    <name type="scientific">Saccharomyces cerevisiae (strain ATCC 204508 / S288c)</name>
    <name type="common">Baker's yeast</name>
    <dbReference type="NCBI Taxonomy" id="559292"/>
    <lineage>
        <taxon>Eukaryota</taxon>
        <taxon>Fungi</taxon>
        <taxon>Dikarya</taxon>
        <taxon>Ascomycota</taxon>
        <taxon>Saccharomycotina</taxon>
        <taxon>Saccharomycetes</taxon>
        <taxon>Saccharomycetales</taxon>
        <taxon>Saccharomycetaceae</taxon>
        <taxon>Saccharomyces</taxon>
    </lineage>
</organism>
<protein>
    <recommendedName>
        <fullName>Tricalbin-1</fullName>
    </recommendedName>
</protein>
<sequence length="1186" mass="133576">MAKEDTGVTAPKKPETAQVANINGIDKLEPPKTKEETESSKSVSSEKAAHASDESFKRSIHEASYVGWKQIGGWEDKDELTLDDELMDMTRETFLDNIIPDSLYGDWYHSVAIFFIGGVASFALGHYKFSMGSAFFVIVITSLLYRTSAKKYRGSIRELVQKEFTVQKVENDYESLEWLNAFLDKYWPILEPSVSQLIVQQANEQMATNEAIPKFITQLWIDELTLGVKPPRVDLVKTFQNTASDVVVMDWGISFTPHDLCDMSAKQVRNYVNELAVVKAKIFGITIPVSVSDIAFKAHARVKFKLMTPFPHVETVNIQLLKVPDFDFVATLFGRSIFNWEILAIPGLMTLIQKMAKKYMGPILLPPFSLQLNIPQLLSGSNLSIGILEITVKNAKGLKRTSSILNESIDPYLSFEFNDISIAKTRTVRDTLNPVWDETLYVLLNSFTDPLTISVYDKRAKLKDKVLGRIQYNLNTLHDKTTQRNLKAQFLRNSKPVGELTFDLRFFPTLEEKKLPDGSVEELPDLNTGIAKVVVEEGSRFAEEEQKVTAYVEVYLNAKLVLTTGKATDTGTLKWNSDYEAVIADRRKTRYKFVVKDGKGEEIGSTIQTLNDLIDRSQVNKNLIPLKNQKGDIKITTYWRPVRLEIGSNSVAYTPPIGAIRVFIEKANDLRNLEKFGTIDPYCKVLVNGLSKGRTDFKSQTLNPVWNQVIYVAVTSPNQRITLQCMDVETVNKDRSLGEFNVNVQDLFKKDENDKYEETIDEKAKVGRLVMPKKKPKGTITYYTSFYPALPVLTLEEIQDLDKVNKKKKALELRKSAIDEKKISKEDKAKFDQEWNEVKELEDMYSNRQKLDLPELLQYNQGVLAVTVLNGELPDSGLYVQAFFDDNGHPRFVSPRIPSRIVKNGWSGDVIIKELDKSITTFRVAKNKNYNRVEKCVCEVELPTQELVKNCYYKPSILHLSGEGSAKLMLQISWFPIDTKQLPANDLITNSGDLTIMSRSAENLIASDLNGYSDPYLKYYINNEEDCAYKTKVVKKTLNPKWNDEGTIQINNRLNDVLRIKVMDWDSTSADDTIGTAEIPLNKVKVEGTTELDVPVEGLENAGQDGGMLHLAFSFKPRYTISVSKREKKVGDIASKGLGTGLKAGTTVIGGGVGAIGKIKKGVFGGLGSLTNHKKNHEMGEEETKF</sequence>
<dbReference type="EMBL" id="X94335">
    <property type="protein sequence ID" value="CAA64008.1"/>
    <property type="molecule type" value="Genomic_DNA"/>
</dbReference>
<dbReference type="EMBL" id="Z74994">
    <property type="protein sequence ID" value="CAA99281.1"/>
    <property type="molecule type" value="Genomic_DNA"/>
</dbReference>
<dbReference type="EMBL" id="BK006948">
    <property type="protein sequence ID" value="DAA10864.1"/>
    <property type="molecule type" value="Genomic_DNA"/>
</dbReference>
<dbReference type="PIR" id="S61647">
    <property type="entry name" value="S61647"/>
</dbReference>
<dbReference type="RefSeq" id="NP_014729.1">
    <property type="nucleotide sequence ID" value="NM_001183505.1"/>
</dbReference>
<dbReference type="SMR" id="Q12466"/>
<dbReference type="BioGRID" id="34484">
    <property type="interactions" value="154"/>
</dbReference>
<dbReference type="DIP" id="DIP-6292N"/>
<dbReference type="FunCoup" id="Q12466">
    <property type="interactions" value="206"/>
</dbReference>
<dbReference type="IntAct" id="Q12466">
    <property type="interactions" value="8"/>
</dbReference>
<dbReference type="MINT" id="Q12466"/>
<dbReference type="STRING" id="4932.YOR086C"/>
<dbReference type="TCDB" id="9.A.57.1.10">
    <property type="family name" value="the extended-synaptotagmin (e-syt) family"/>
</dbReference>
<dbReference type="CarbonylDB" id="Q12466"/>
<dbReference type="iPTMnet" id="Q12466"/>
<dbReference type="PaxDb" id="4932-YOR086C"/>
<dbReference type="PeptideAtlas" id="Q12466"/>
<dbReference type="EnsemblFungi" id="YOR086C_mRNA">
    <property type="protein sequence ID" value="YOR086C"/>
    <property type="gene ID" value="YOR086C"/>
</dbReference>
<dbReference type="GeneID" id="854253"/>
<dbReference type="KEGG" id="sce:YOR086C"/>
<dbReference type="AGR" id="SGD:S000005612"/>
<dbReference type="SGD" id="S000005612">
    <property type="gene designation" value="TCB1"/>
</dbReference>
<dbReference type="VEuPathDB" id="FungiDB:YOR086C"/>
<dbReference type="eggNOG" id="KOG1012">
    <property type="taxonomic scope" value="Eukaryota"/>
</dbReference>
<dbReference type="GeneTree" id="ENSGT00940000176636"/>
<dbReference type="HOGENOM" id="CLU_001661_1_1_1"/>
<dbReference type="InParanoid" id="Q12466"/>
<dbReference type="OMA" id="GWTGDVM"/>
<dbReference type="OrthoDB" id="1029639at2759"/>
<dbReference type="BioCyc" id="YEAST:G3O-33621-MONOMER"/>
<dbReference type="BioGRID-ORCS" id="854253">
    <property type="hits" value="6 hits in 10 CRISPR screens"/>
</dbReference>
<dbReference type="PRO" id="PR:Q12466"/>
<dbReference type="Proteomes" id="UP000002311">
    <property type="component" value="Chromosome XV"/>
</dbReference>
<dbReference type="RNAct" id="Q12466">
    <property type="molecule type" value="protein"/>
</dbReference>
<dbReference type="GO" id="GO:0071944">
    <property type="term" value="C:cell periphery"/>
    <property type="evidence" value="ECO:0007005"/>
    <property type="project" value="SGD"/>
</dbReference>
<dbReference type="GO" id="GO:0032541">
    <property type="term" value="C:cortical endoplasmic reticulum"/>
    <property type="evidence" value="ECO:0000314"/>
    <property type="project" value="SGD"/>
</dbReference>
<dbReference type="GO" id="GO:0005783">
    <property type="term" value="C:endoplasmic reticulum"/>
    <property type="evidence" value="ECO:0007005"/>
    <property type="project" value="SGD"/>
</dbReference>
<dbReference type="GO" id="GO:0005789">
    <property type="term" value="C:endoplasmic reticulum membrane"/>
    <property type="evidence" value="ECO:0007669"/>
    <property type="project" value="UniProtKB-SubCell"/>
</dbReference>
<dbReference type="GO" id="GO:0005739">
    <property type="term" value="C:mitochondrion"/>
    <property type="evidence" value="ECO:0007005"/>
    <property type="project" value="SGD"/>
</dbReference>
<dbReference type="GO" id="GO:0005886">
    <property type="term" value="C:plasma membrane"/>
    <property type="evidence" value="ECO:0007005"/>
    <property type="project" value="SGD"/>
</dbReference>
<dbReference type="GO" id="GO:0005544">
    <property type="term" value="F:calcium-dependent phospholipid binding"/>
    <property type="evidence" value="ECO:0007669"/>
    <property type="project" value="UniProtKB-KW"/>
</dbReference>
<dbReference type="GO" id="GO:0008289">
    <property type="term" value="F:lipid binding"/>
    <property type="evidence" value="ECO:0000314"/>
    <property type="project" value="SGD"/>
</dbReference>
<dbReference type="GO" id="GO:0046872">
    <property type="term" value="F:metal ion binding"/>
    <property type="evidence" value="ECO:0007669"/>
    <property type="project" value="UniProtKB-KW"/>
</dbReference>
<dbReference type="GO" id="GO:0090158">
    <property type="term" value="P:endoplasmic reticulum membrane organization"/>
    <property type="evidence" value="ECO:0000316"/>
    <property type="project" value="SGD"/>
</dbReference>
<dbReference type="GO" id="GO:0061817">
    <property type="term" value="P:endoplasmic reticulum-plasma membrane tethering"/>
    <property type="evidence" value="ECO:0007669"/>
    <property type="project" value="InterPro"/>
</dbReference>
<dbReference type="GO" id="GO:0035621">
    <property type="term" value="P:ER to Golgi ceramide transport"/>
    <property type="evidence" value="ECO:0000315"/>
    <property type="project" value="SGD"/>
</dbReference>
<dbReference type="GO" id="GO:0055091">
    <property type="term" value="P:phospholipid homeostasis"/>
    <property type="evidence" value="ECO:0000316"/>
    <property type="project" value="SGD"/>
</dbReference>
<dbReference type="GO" id="GO:0060304">
    <property type="term" value="P:regulation of phosphatidylinositol dephosphorylation"/>
    <property type="evidence" value="ECO:0000316"/>
    <property type="project" value="SGD"/>
</dbReference>
<dbReference type="CDD" id="cd04044">
    <property type="entry name" value="C2A_Tricalbin-like"/>
    <property type="match status" value="1"/>
</dbReference>
<dbReference type="CDD" id="cd04052">
    <property type="entry name" value="C2B_Tricalbin-like"/>
    <property type="match status" value="1"/>
</dbReference>
<dbReference type="CDD" id="cd04045">
    <property type="entry name" value="C2C_Tricalbin-like"/>
    <property type="match status" value="1"/>
</dbReference>
<dbReference type="CDD" id="cd04040">
    <property type="entry name" value="C2D_Tricalbin-like"/>
    <property type="match status" value="1"/>
</dbReference>
<dbReference type="CDD" id="cd21678">
    <property type="entry name" value="SMP_TCB"/>
    <property type="match status" value="1"/>
</dbReference>
<dbReference type="FunFam" id="2.60.40.150:FF:000217">
    <property type="entry name" value="Tcb1p"/>
    <property type="match status" value="1"/>
</dbReference>
<dbReference type="FunFam" id="2.60.40.150:FF:000226">
    <property type="entry name" value="Tcb1p"/>
    <property type="match status" value="1"/>
</dbReference>
<dbReference type="FunFam" id="2.60.40.150:FF:000230">
    <property type="entry name" value="Tcb1p"/>
    <property type="match status" value="1"/>
</dbReference>
<dbReference type="Gene3D" id="2.60.40.150">
    <property type="entry name" value="C2 domain"/>
    <property type="match status" value="3"/>
</dbReference>
<dbReference type="InterPro" id="IPR000008">
    <property type="entry name" value="C2_dom"/>
</dbReference>
<dbReference type="InterPro" id="IPR035892">
    <property type="entry name" value="C2_domain_sf"/>
</dbReference>
<dbReference type="InterPro" id="IPR037761">
    <property type="entry name" value="C2A_Tricalbin"/>
</dbReference>
<dbReference type="InterPro" id="IPR037765">
    <property type="entry name" value="C2B_Tricalbin"/>
</dbReference>
<dbReference type="InterPro" id="IPR037762">
    <property type="entry name" value="C2C_Tricalbin"/>
</dbReference>
<dbReference type="InterPro" id="IPR037756">
    <property type="entry name" value="C2D_Tricalbin"/>
</dbReference>
<dbReference type="InterPro" id="IPR031468">
    <property type="entry name" value="SMP_LBD"/>
</dbReference>
<dbReference type="InterPro" id="IPR056910">
    <property type="entry name" value="TCB1-3_C2"/>
</dbReference>
<dbReference type="InterPro" id="IPR017147">
    <property type="entry name" value="Tricalbin"/>
</dbReference>
<dbReference type="InterPro" id="IPR052455">
    <property type="entry name" value="Tricalbin_domain"/>
</dbReference>
<dbReference type="PANTHER" id="PTHR46980">
    <property type="entry name" value="TRICALBIN-1-RELATED"/>
    <property type="match status" value="1"/>
</dbReference>
<dbReference type="PANTHER" id="PTHR46980:SF2">
    <property type="entry name" value="TRICALBIN-1-RELATED"/>
    <property type="match status" value="1"/>
</dbReference>
<dbReference type="Pfam" id="PF00168">
    <property type="entry name" value="C2"/>
    <property type="match status" value="4"/>
</dbReference>
<dbReference type="Pfam" id="PF24920">
    <property type="entry name" value="C2_TCB1"/>
    <property type="match status" value="1"/>
</dbReference>
<dbReference type="PIRSF" id="PIRSF037232">
    <property type="entry name" value="Tricalbin"/>
    <property type="match status" value="1"/>
</dbReference>
<dbReference type="PRINTS" id="PR00360">
    <property type="entry name" value="C2DOMAIN"/>
</dbReference>
<dbReference type="SMART" id="SM00239">
    <property type="entry name" value="C2"/>
    <property type="match status" value="4"/>
</dbReference>
<dbReference type="SUPFAM" id="SSF49562">
    <property type="entry name" value="C2 domain (Calcium/lipid-binding domain, CaLB)"/>
    <property type="match status" value="4"/>
</dbReference>
<dbReference type="PROSITE" id="PS50004">
    <property type="entry name" value="C2"/>
    <property type="match status" value="4"/>
</dbReference>
<dbReference type="PROSITE" id="PS51847">
    <property type="entry name" value="SMP"/>
    <property type="match status" value="1"/>
</dbReference>
<name>TCB1_YEAST</name>
<feature type="chain" id="PRO_0000252271" description="Tricalbin-1">
    <location>
        <begin position="1"/>
        <end position="1186"/>
    </location>
</feature>
<feature type="topological domain" description="Cytoplasmic" evidence="2">
    <location>
        <begin position="1"/>
        <end position="106"/>
    </location>
</feature>
<feature type="transmembrane region" description="Helical" evidence="2">
    <location>
        <begin position="107"/>
        <end position="127"/>
    </location>
</feature>
<feature type="topological domain" description="Extracellular" evidence="2">
    <location>
        <position position="128"/>
    </location>
</feature>
<feature type="transmembrane region" description="Helical" evidence="2">
    <location>
        <begin position="129"/>
        <end position="149"/>
    </location>
</feature>
<feature type="topological domain" description="Cytoplasmic" evidence="2">
    <location>
        <begin position="150"/>
        <end position="1186"/>
    </location>
</feature>
<feature type="domain" description="SMP-LTD" evidence="4">
    <location>
        <begin position="172"/>
        <end position="375"/>
    </location>
</feature>
<feature type="domain" description="C2 1" evidence="3">
    <location>
        <begin position="366"/>
        <end position="487"/>
    </location>
</feature>
<feature type="domain" description="C2 2" evidence="3">
    <location>
        <begin position="512"/>
        <end position="636"/>
    </location>
</feature>
<feature type="domain" description="C2 3" evidence="3">
    <location>
        <begin position="640"/>
        <end position="757"/>
    </location>
</feature>
<feature type="domain" description="C2 4" evidence="3">
    <location>
        <begin position="976"/>
        <end position="1094"/>
    </location>
</feature>
<feature type="region of interest" description="Disordered" evidence="5">
    <location>
        <begin position="1"/>
        <end position="50"/>
    </location>
</feature>
<feature type="coiled-coil region" evidence="2">
    <location>
        <begin position="795"/>
        <end position="822"/>
    </location>
</feature>
<feature type="compositionally biased region" description="Basic and acidic residues" evidence="5">
    <location>
        <begin position="26"/>
        <end position="39"/>
    </location>
</feature>
<feature type="binding site" evidence="3">
    <location>
        <position position="1008"/>
    </location>
    <ligand>
        <name>Ca(2+)</name>
        <dbReference type="ChEBI" id="CHEBI:29108"/>
        <label>1</label>
    </ligand>
</feature>
<feature type="binding site" evidence="3">
    <location>
        <position position="1008"/>
    </location>
    <ligand>
        <name>Ca(2+)</name>
        <dbReference type="ChEBI" id="CHEBI:29108"/>
        <label>2</label>
    </ligand>
</feature>
<feature type="binding site" evidence="3">
    <location>
        <position position="1014"/>
    </location>
    <ligand>
        <name>Ca(2+)</name>
        <dbReference type="ChEBI" id="CHEBI:29108"/>
        <label>1</label>
    </ligand>
</feature>
<feature type="binding site" evidence="3">
    <location>
        <position position="1064"/>
    </location>
    <ligand>
        <name>Ca(2+)</name>
        <dbReference type="ChEBI" id="CHEBI:29108"/>
        <label>1</label>
    </ligand>
</feature>
<feature type="binding site" evidence="3">
    <location>
        <position position="1064"/>
    </location>
    <ligand>
        <name>Ca(2+)</name>
        <dbReference type="ChEBI" id="CHEBI:29108"/>
        <label>2</label>
    </ligand>
</feature>
<feature type="binding site" evidence="3">
    <location>
        <position position="1066"/>
    </location>
    <ligand>
        <name>Ca(2+)</name>
        <dbReference type="ChEBI" id="CHEBI:29108"/>
        <label>1</label>
    </ligand>
</feature>
<feature type="binding site" evidence="3">
    <location>
        <position position="1066"/>
    </location>
    <ligand>
        <name>Ca(2+)</name>
        <dbReference type="ChEBI" id="CHEBI:29108"/>
        <label>2</label>
    </ligand>
</feature>
<feature type="binding site" evidence="3">
    <location>
        <position position="1066"/>
    </location>
    <ligand>
        <name>Ca(2+)</name>
        <dbReference type="ChEBI" id="CHEBI:29108"/>
        <label>3</label>
    </ligand>
</feature>
<feature type="binding site" evidence="3">
    <location>
        <position position="1069"/>
    </location>
    <ligand>
        <name>Ca(2+)</name>
        <dbReference type="ChEBI" id="CHEBI:29108"/>
        <label>3</label>
    </ligand>
</feature>
<feature type="binding site" evidence="3">
    <location>
        <position position="1072"/>
    </location>
    <ligand>
        <name>Ca(2+)</name>
        <dbReference type="ChEBI" id="CHEBI:29108"/>
        <label>2</label>
    </ligand>
</feature>
<feature type="binding site" evidence="3">
    <location>
        <position position="1072"/>
    </location>
    <ligand>
        <name>Ca(2+)</name>
        <dbReference type="ChEBI" id="CHEBI:29108"/>
        <label>3</label>
    </ligand>
</feature>
<feature type="modified residue" description="Phosphoserine" evidence="12 13">
    <location>
        <position position="1000"/>
    </location>
</feature>
<reference key="1">
    <citation type="journal article" date="1997" name="Yeast">
        <title>DNA sequencing and analysis of 130 kb from yeast chromosome XV.</title>
        <authorList>
            <person name="Voss H."/>
            <person name="Benes V."/>
            <person name="Andrade M.A."/>
            <person name="Valencia A."/>
            <person name="Rechmann S."/>
            <person name="Teodoru C."/>
            <person name="Schwager C."/>
            <person name="Paces V."/>
            <person name="Sander C."/>
            <person name="Ansorge W."/>
        </authorList>
    </citation>
    <scope>NUCLEOTIDE SEQUENCE [GENOMIC DNA]</scope>
</reference>
<reference key="2">
    <citation type="journal article" date="1997" name="Nature">
        <title>The nucleotide sequence of Saccharomyces cerevisiae chromosome XV.</title>
        <authorList>
            <person name="Dujon B."/>
            <person name="Albermann K."/>
            <person name="Aldea M."/>
            <person name="Alexandraki D."/>
            <person name="Ansorge W."/>
            <person name="Arino J."/>
            <person name="Benes V."/>
            <person name="Bohn C."/>
            <person name="Bolotin-Fukuhara M."/>
            <person name="Bordonne R."/>
            <person name="Boyer J."/>
            <person name="Camasses A."/>
            <person name="Casamayor A."/>
            <person name="Casas C."/>
            <person name="Cheret G."/>
            <person name="Cziepluch C."/>
            <person name="Daignan-Fornier B."/>
            <person name="Dang V.-D."/>
            <person name="de Haan M."/>
            <person name="Delius H."/>
            <person name="Durand P."/>
            <person name="Fairhead C."/>
            <person name="Feldmann H."/>
            <person name="Gaillon L."/>
            <person name="Galisson F."/>
            <person name="Gamo F.-J."/>
            <person name="Gancedo C."/>
            <person name="Goffeau A."/>
            <person name="Goulding S.E."/>
            <person name="Grivell L.A."/>
            <person name="Habbig B."/>
            <person name="Hand N.J."/>
            <person name="Hani J."/>
            <person name="Hattenhorst U."/>
            <person name="Hebling U."/>
            <person name="Hernando Y."/>
            <person name="Herrero E."/>
            <person name="Heumann K."/>
            <person name="Hiesel R."/>
            <person name="Hilger F."/>
            <person name="Hofmann B."/>
            <person name="Hollenberg C.P."/>
            <person name="Hughes B."/>
            <person name="Jauniaux J.-C."/>
            <person name="Kalogeropoulos A."/>
            <person name="Katsoulou C."/>
            <person name="Kordes E."/>
            <person name="Lafuente M.J."/>
            <person name="Landt O."/>
            <person name="Louis E.J."/>
            <person name="Maarse A.C."/>
            <person name="Madania A."/>
            <person name="Mannhaupt G."/>
            <person name="Marck C."/>
            <person name="Martin R.P."/>
            <person name="Mewes H.-W."/>
            <person name="Michaux G."/>
            <person name="Paces V."/>
            <person name="Parle-McDermott A.G."/>
            <person name="Pearson B.M."/>
            <person name="Perrin A."/>
            <person name="Pettersson B."/>
            <person name="Poch O."/>
            <person name="Pohl T.M."/>
            <person name="Poirey R."/>
            <person name="Portetelle D."/>
            <person name="Pujol A."/>
            <person name="Purnelle B."/>
            <person name="Ramezani Rad M."/>
            <person name="Rechmann S."/>
            <person name="Schwager C."/>
            <person name="Schweizer M."/>
            <person name="Sor F."/>
            <person name="Sterky F."/>
            <person name="Tarassov I.A."/>
            <person name="Teodoru C."/>
            <person name="Tettelin H."/>
            <person name="Thierry A."/>
            <person name="Tobiasch E."/>
            <person name="Tzermia M."/>
            <person name="Uhlen M."/>
            <person name="Unseld M."/>
            <person name="Valens M."/>
            <person name="Vandenbol M."/>
            <person name="Vetter I."/>
            <person name="Vlcek C."/>
            <person name="Voet M."/>
            <person name="Volckaert G."/>
            <person name="Voss H."/>
            <person name="Wambutt R."/>
            <person name="Wedler H."/>
            <person name="Wiemann S."/>
            <person name="Winsor B."/>
            <person name="Wolfe K.H."/>
            <person name="Zollner A."/>
            <person name="Zumstein E."/>
            <person name="Kleine K."/>
        </authorList>
    </citation>
    <scope>NUCLEOTIDE SEQUENCE [LARGE SCALE GENOMIC DNA]</scope>
    <source>
        <strain>ATCC 204508 / S288c</strain>
    </source>
</reference>
<reference key="3">
    <citation type="journal article" date="2014" name="G3 (Bethesda)">
        <title>The reference genome sequence of Saccharomyces cerevisiae: Then and now.</title>
        <authorList>
            <person name="Engel S.R."/>
            <person name="Dietrich F.S."/>
            <person name="Fisk D.G."/>
            <person name="Binkley G."/>
            <person name="Balakrishnan R."/>
            <person name="Costanzo M.C."/>
            <person name="Dwight S.S."/>
            <person name="Hitz B.C."/>
            <person name="Karra K."/>
            <person name="Nash R.S."/>
            <person name="Weng S."/>
            <person name="Wong E.D."/>
            <person name="Lloyd P."/>
            <person name="Skrzypek M.S."/>
            <person name="Miyasato S.R."/>
            <person name="Simison M."/>
            <person name="Cherry J.M."/>
        </authorList>
    </citation>
    <scope>GENOME REANNOTATION</scope>
    <source>
        <strain>ATCC 204508 / S288c</strain>
    </source>
</reference>
<reference key="4">
    <citation type="journal article" date="2003" name="Nature">
        <title>Global analysis of protein localization in budding yeast.</title>
        <authorList>
            <person name="Huh W.-K."/>
            <person name="Falvo J.V."/>
            <person name="Gerke L.C."/>
            <person name="Carroll A.S."/>
            <person name="Howson R.W."/>
            <person name="Weissman J.S."/>
            <person name="O'Shea E.K."/>
        </authorList>
    </citation>
    <scope>SUBCELLULAR LOCATION [LARGE SCALE ANALYSIS]</scope>
</reference>
<reference key="5">
    <citation type="journal article" date="2003" name="Nature">
        <title>Global analysis of protein expression in yeast.</title>
        <authorList>
            <person name="Ghaemmaghami S."/>
            <person name="Huh W.-K."/>
            <person name="Bower K."/>
            <person name="Howson R.W."/>
            <person name="Belle A."/>
            <person name="Dephoure N."/>
            <person name="O'Shea E.K."/>
            <person name="Weissman J.S."/>
        </authorList>
    </citation>
    <scope>LEVEL OF PROTEIN EXPRESSION [LARGE SCALE ANALYSIS]</scope>
</reference>
<reference key="6">
    <citation type="journal article" date="2004" name="Biochemistry">
        <title>The tricalbin C2 domains: lipid-binding properties of a novel, synaptotagmin-like yeast protein family.</title>
        <authorList>
            <person name="Schulz T.A."/>
            <person name="Creutz C.E."/>
        </authorList>
    </citation>
    <scope>FUNCTION</scope>
    <scope>CALCIUM-DEPENDENT BINDING TO PHOSPHOLIPIDS</scope>
</reference>
<reference key="7">
    <citation type="journal article" date="2004" name="Cell. Mol. Life Sci.">
        <title>Characterization of the yeast tricalbins: membrane-bound multi-C2-domain proteins that form complexes involved in membrane trafficking.</title>
        <authorList>
            <person name="Creutz C.E."/>
            <person name="Snyder S.L."/>
            <person name="Schulz T.A."/>
        </authorList>
    </citation>
    <scope>FUNCTION</scope>
    <scope>INTERACTION WITH TCB2</scope>
</reference>
<reference key="8">
    <citation type="journal article" date="2006" name="Proc. Natl. Acad. Sci. U.S.A.">
        <title>A global topology map of the Saccharomyces cerevisiae membrane proteome.</title>
        <authorList>
            <person name="Kim H."/>
            <person name="Melen K."/>
            <person name="Oesterberg M."/>
            <person name="von Heijne G."/>
        </authorList>
    </citation>
    <scope>TOPOLOGY [LARGE SCALE ANALYSIS]</scope>
    <source>
        <strain>ATCC 208353 / W303-1A</strain>
    </source>
</reference>
<reference key="9">
    <citation type="journal article" date="2008" name="Mol. Cell. Proteomics">
        <title>A multidimensional chromatography technology for in-depth phosphoproteome analysis.</title>
        <authorList>
            <person name="Albuquerque C.P."/>
            <person name="Smolka M.B."/>
            <person name="Payne S.H."/>
            <person name="Bafna V."/>
            <person name="Eng J."/>
            <person name="Zhou H."/>
        </authorList>
    </citation>
    <scope>PHOSPHORYLATION [LARGE SCALE ANALYSIS] AT SER-1000</scope>
    <scope>IDENTIFICATION BY MASS SPECTROMETRY [LARGE SCALE ANALYSIS]</scope>
</reference>
<reference key="10">
    <citation type="journal article" date="2009" name="Science">
        <title>Global analysis of Cdk1 substrate phosphorylation sites provides insights into evolution.</title>
        <authorList>
            <person name="Holt L.J."/>
            <person name="Tuch B.B."/>
            <person name="Villen J."/>
            <person name="Johnson A.D."/>
            <person name="Gygi S.P."/>
            <person name="Morgan D.O."/>
        </authorList>
    </citation>
    <scope>PHOSPHORYLATION [LARGE SCALE ANALYSIS] AT SER-1000</scope>
    <scope>IDENTIFICATION BY MASS SPECTROMETRY [LARGE SCALE ANALYSIS]</scope>
</reference>
<reference key="11">
    <citation type="journal article" date="2012" name="J. Cell Sci.">
        <title>A conserved membrane-binding domain targets proteins to organelle contact sites.</title>
        <authorList>
            <person name="Toulmay A."/>
            <person name="Prinz W.A."/>
        </authorList>
    </citation>
    <scope>SUBCELLULAR LOCATION</scope>
</reference>
<accession>Q12466</accession>
<accession>D6W2E8</accession>
<comment type="function">
    <text evidence="8 9">May play a role in membrane trafficking.</text>
</comment>
<comment type="cofactor">
    <cofactor evidence="3">
        <name>Ca(2+)</name>
        <dbReference type="ChEBI" id="CHEBI:29108"/>
    </cofactor>
    <text evidence="1">Binds 3 Ca(2+) ions per subunit. The ions are bound to the C2 domains.</text>
</comment>
<comment type="subunit">
    <text evidence="9">Interacts with TCB2 via its C-terminal domain.</text>
</comment>
<comment type="interaction">
    <interactant intactId="EBI-34614">
        <id>Q12466</id>
    </interactant>
    <interactant intactId="EBI-28779">
        <id>P48231</id>
        <label>TCB2</label>
    </interactant>
    <organismsDiffer>false</organismsDiffer>
    <experiments>2</experiments>
</comment>
<comment type="subcellular location">
    <subcellularLocation>
        <location evidence="6">Cell membrane</location>
        <topology evidence="2">Multi-pass membrane protein</topology>
    </subcellularLocation>
    <subcellularLocation>
        <location evidence="10">Endoplasmic reticulum membrane</location>
        <topology evidence="2">Multi-pass membrane protein</topology>
    </subcellularLocation>
    <text evidence="10">More enriched in the cortical endoplasmic reticulum (ER) that is closely apposed to the cell membrane than in the perinuclear ER or internal ER tubules that connect the nucleus to the cortical ER.</text>
</comment>
<comment type="domain">
    <text evidence="4">The SMP-LTD domain is a barrel-like domain that can bind various types of glycerophospholipids in its interior and mediate their transfer between two adjacent bilayers.</text>
</comment>
<comment type="domain">
    <text>The C-terminal C2 domain shows Ca(2+)-dependent phospholipid binding. It binds to phosphatidylserine, phosphatidylinositol and various phosphoinositides. The other C2 domains do not retain all 5 conserved Asp residues found in calcium-binding C2 domains.</text>
</comment>
<comment type="miscellaneous">
    <text evidence="7">Present with 6140 molecules/cell in log phase SD medium.</text>
</comment>
<comment type="similarity">
    <text evidence="11">Belongs to the tricalbin family.</text>
</comment>
<proteinExistence type="evidence at protein level"/>